<comment type="function">
    <text evidence="1">Catalyzes the formation of phosphatidylethanolamine (PtdEtn) from phosphatidylserine (PtdSer).</text>
</comment>
<comment type="catalytic activity">
    <reaction evidence="1">
        <text>a 1,2-diacyl-sn-glycero-3-phospho-L-serine + H(+) = a 1,2-diacyl-sn-glycero-3-phosphoethanolamine + CO2</text>
        <dbReference type="Rhea" id="RHEA:20828"/>
        <dbReference type="ChEBI" id="CHEBI:15378"/>
        <dbReference type="ChEBI" id="CHEBI:16526"/>
        <dbReference type="ChEBI" id="CHEBI:57262"/>
        <dbReference type="ChEBI" id="CHEBI:64612"/>
        <dbReference type="EC" id="4.1.1.65"/>
    </reaction>
</comment>
<comment type="cofactor">
    <cofactor evidence="1">
        <name>pyruvate</name>
        <dbReference type="ChEBI" id="CHEBI:15361"/>
    </cofactor>
    <text evidence="1">Binds 1 pyruvoyl group covalently per subunit.</text>
</comment>
<comment type="pathway">
    <text evidence="1">Phospholipid metabolism; phosphatidylethanolamine biosynthesis; phosphatidylethanolamine from CDP-diacylglycerol: step 2/2.</text>
</comment>
<comment type="subunit">
    <text evidence="1">Heterodimer of a large membrane-associated beta subunit and a small pyruvoyl-containing alpha subunit.</text>
</comment>
<comment type="subcellular location">
    <subcellularLocation>
        <location evidence="1">Cell membrane</location>
        <topology evidence="1">Peripheral membrane protein</topology>
    </subcellularLocation>
</comment>
<comment type="PTM">
    <text evidence="1">Is synthesized initially as an inactive proenzyme. Formation of the active enzyme involves a self-maturation process in which the active site pyruvoyl group is generated from an internal serine residue via an autocatalytic post-translational modification. Two non-identical subunits are generated from the proenzyme in this reaction, and the pyruvate is formed at the N-terminus of the alpha chain, which is derived from the carboxyl end of the proenzyme. The post-translation cleavage follows an unusual pathway, termed non-hydrolytic serinolysis, in which the side chain hydroxyl group of the serine supplies its oxygen atom to form the C-terminus of the beta chain, while the remainder of the serine residue undergoes an oxidative deamination to produce ammonia and the pyruvoyl prosthetic group on the alpha chain.</text>
</comment>
<comment type="similarity">
    <text evidence="1">Belongs to the phosphatidylserine decarboxylase family. PSD-A subfamily.</text>
</comment>
<gene>
    <name evidence="1" type="primary">psd</name>
    <name type="ordered locus">RC0325</name>
</gene>
<dbReference type="EC" id="4.1.1.65" evidence="1"/>
<dbReference type="EMBL" id="AE006914">
    <property type="protein sequence ID" value="AAL02863.1"/>
    <property type="molecule type" value="Genomic_DNA"/>
</dbReference>
<dbReference type="PIR" id="E97740">
    <property type="entry name" value="E97740"/>
</dbReference>
<dbReference type="RefSeq" id="WP_004996349.1">
    <property type="nucleotide sequence ID" value="NC_003103.1"/>
</dbReference>
<dbReference type="SMR" id="Q92IU5"/>
<dbReference type="KEGG" id="rco:RC0325"/>
<dbReference type="HOGENOM" id="CLU_072492_0_0_5"/>
<dbReference type="UniPathway" id="UPA00558">
    <property type="reaction ID" value="UER00616"/>
</dbReference>
<dbReference type="Proteomes" id="UP000000816">
    <property type="component" value="Chromosome"/>
</dbReference>
<dbReference type="GO" id="GO:0005886">
    <property type="term" value="C:plasma membrane"/>
    <property type="evidence" value="ECO:0007669"/>
    <property type="project" value="UniProtKB-SubCell"/>
</dbReference>
<dbReference type="GO" id="GO:0004609">
    <property type="term" value="F:phosphatidylserine decarboxylase activity"/>
    <property type="evidence" value="ECO:0007669"/>
    <property type="project" value="UniProtKB-UniRule"/>
</dbReference>
<dbReference type="GO" id="GO:0006646">
    <property type="term" value="P:phosphatidylethanolamine biosynthetic process"/>
    <property type="evidence" value="ECO:0007669"/>
    <property type="project" value="UniProtKB-UniRule"/>
</dbReference>
<dbReference type="HAMAP" id="MF_00664">
    <property type="entry name" value="PS_decarb_PSD_A"/>
    <property type="match status" value="1"/>
</dbReference>
<dbReference type="InterPro" id="IPR003817">
    <property type="entry name" value="PS_Dcarbxylase"/>
</dbReference>
<dbReference type="InterPro" id="IPR033175">
    <property type="entry name" value="PSD-A"/>
</dbReference>
<dbReference type="NCBIfam" id="NF003677">
    <property type="entry name" value="PRK05305.1-1"/>
    <property type="match status" value="1"/>
</dbReference>
<dbReference type="NCBIfam" id="NF003678">
    <property type="entry name" value="PRK05305.1-2"/>
    <property type="match status" value="1"/>
</dbReference>
<dbReference type="NCBIfam" id="NF003679">
    <property type="entry name" value="PRK05305.1-3"/>
    <property type="match status" value="1"/>
</dbReference>
<dbReference type="NCBIfam" id="NF003681">
    <property type="entry name" value="PRK05305.2-1"/>
    <property type="match status" value="1"/>
</dbReference>
<dbReference type="NCBIfam" id="NF003685">
    <property type="entry name" value="PRK05305.2-5"/>
    <property type="match status" value="1"/>
</dbReference>
<dbReference type="PANTHER" id="PTHR35809">
    <property type="entry name" value="ARCHAETIDYLSERINE DECARBOXYLASE PROENZYME-RELATED"/>
    <property type="match status" value="1"/>
</dbReference>
<dbReference type="PANTHER" id="PTHR35809:SF1">
    <property type="entry name" value="ARCHAETIDYLSERINE DECARBOXYLASE PROENZYME-RELATED"/>
    <property type="match status" value="1"/>
</dbReference>
<dbReference type="Pfam" id="PF02666">
    <property type="entry name" value="PS_Dcarbxylase"/>
    <property type="match status" value="1"/>
</dbReference>
<feature type="chain" id="PRO_0000029803" description="Phosphatidylserine decarboxylase beta chain" evidence="1">
    <location>
        <begin position="1"/>
        <end position="187"/>
    </location>
</feature>
<feature type="chain" id="PRO_0000029804" description="Phosphatidylserine decarboxylase alpha chain" evidence="1">
    <location>
        <begin position="188"/>
        <end position="231"/>
    </location>
</feature>
<feature type="active site" description="Schiff-base intermediate with substrate; via pyruvic acid" evidence="1">
    <location>
        <position position="188"/>
    </location>
</feature>
<feature type="site" description="Cleavage (non-hydrolytic); by autocatalysis" evidence="1">
    <location>
        <begin position="187"/>
        <end position="188"/>
    </location>
</feature>
<feature type="modified residue" description="Pyruvic acid (Ser); by autocatalysis" evidence="1">
    <location>
        <position position="188"/>
    </location>
</feature>
<accession>Q92IU5</accession>
<name>PSD_RICCN</name>
<organism>
    <name type="scientific">Rickettsia conorii (strain ATCC VR-613 / Malish 7)</name>
    <dbReference type="NCBI Taxonomy" id="272944"/>
    <lineage>
        <taxon>Bacteria</taxon>
        <taxon>Pseudomonadati</taxon>
        <taxon>Pseudomonadota</taxon>
        <taxon>Alphaproteobacteria</taxon>
        <taxon>Rickettsiales</taxon>
        <taxon>Rickettsiaceae</taxon>
        <taxon>Rickettsieae</taxon>
        <taxon>Rickettsia</taxon>
        <taxon>spotted fever group</taxon>
    </lineage>
</organism>
<evidence type="ECO:0000255" key="1">
    <source>
        <dbReference type="HAMAP-Rule" id="MF_00664"/>
    </source>
</evidence>
<protein>
    <recommendedName>
        <fullName evidence="1">Phosphatidylserine decarboxylase proenzyme</fullName>
        <ecNumber evidence="1">4.1.1.65</ecNumber>
    </recommendedName>
    <component>
        <recommendedName>
            <fullName evidence="1">Phosphatidylserine decarboxylase alpha chain</fullName>
        </recommendedName>
    </component>
    <component>
        <recommendedName>
            <fullName evidence="1">Phosphatidylserine decarboxylase beta chain</fullName>
        </recommendedName>
    </component>
</protein>
<keyword id="KW-1003">Cell membrane</keyword>
<keyword id="KW-0210">Decarboxylase</keyword>
<keyword id="KW-0444">Lipid biosynthesis</keyword>
<keyword id="KW-0443">Lipid metabolism</keyword>
<keyword id="KW-0456">Lyase</keyword>
<keyword id="KW-0472">Membrane</keyword>
<keyword id="KW-0594">Phospholipid biosynthesis</keyword>
<keyword id="KW-1208">Phospholipid metabolism</keyword>
<keyword id="KW-0670">Pyruvate</keyword>
<keyword id="KW-0865">Zymogen</keyword>
<proteinExistence type="inferred from homology"/>
<sequence length="231" mass="25940">MKQYNDLFKIIHREGYIFIASFALVSFLLASFNEKLGCIGCIATAWCIYFFRNPDRFVPISDDLVISPADGIIQEIKEALPPPELGLGDVEMIRVSIFLNIFNVHVNRIPANGKILALHYNPGKFFNASLDKASIYNERQSVLMETAQGQKIVFVQIAGLIARRIVCDLEEGNEVKTGERYGIIRFGSRVDVYLPLKTALLVSKGQTAIGGETIIADFGRKKTTEFKFERK</sequence>
<reference key="1">
    <citation type="journal article" date="2001" name="Science">
        <title>Mechanisms of evolution in Rickettsia conorii and R. prowazekii.</title>
        <authorList>
            <person name="Ogata H."/>
            <person name="Audic S."/>
            <person name="Renesto-Audiffren P."/>
            <person name="Fournier P.-E."/>
            <person name="Barbe V."/>
            <person name="Samson D."/>
            <person name="Roux V."/>
            <person name="Cossart P."/>
            <person name="Weissenbach J."/>
            <person name="Claverie J.-M."/>
            <person name="Raoult D."/>
        </authorList>
    </citation>
    <scope>NUCLEOTIDE SEQUENCE [LARGE SCALE GENOMIC DNA]</scope>
    <source>
        <strain>ATCC VR-613 / Malish 7</strain>
    </source>
</reference>